<keyword id="KW-0002">3D-structure</keyword>
<keyword id="KW-0408">Iron</keyword>
<keyword id="KW-1185">Reference proteome</keyword>
<comment type="function">
    <text evidence="1">Could be a mediator in iron transactions between iron acquisition and iron-requiring processes, such as synthesis and/or repair of Fe-S clusters in biosynthetic enzymes.</text>
</comment>
<comment type="similarity">
    <text evidence="1">Belongs to the Fe(2+)-trafficking protein family.</text>
</comment>
<name>FETP_PSEAE</name>
<reference key="1">
    <citation type="journal article" date="2000" name="Nature">
        <title>Complete genome sequence of Pseudomonas aeruginosa PAO1, an opportunistic pathogen.</title>
        <authorList>
            <person name="Stover C.K."/>
            <person name="Pham X.-Q.T."/>
            <person name="Erwin A.L."/>
            <person name="Mizoguchi S.D."/>
            <person name="Warrener P."/>
            <person name="Hickey M.J."/>
            <person name="Brinkman F.S.L."/>
            <person name="Hufnagle W.O."/>
            <person name="Kowalik D.J."/>
            <person name="Lagrou M."/>
            <person name="Garber R.L."/>
            <person name="Goltry L."/>
            <person name="Tolentino E."/>
            <person name="Westbrock-Wadman S."/>
            <person name="Yuan Y."/>
            <person name="Brody L.L."/>
            <person name="Coulter S.N."/>
            <person name="Folger K.R."/>
            <person name="Kas A."/>
            <person name="Larbig K."/>
            <person name="Lim R.M."/>
            <person name="Smith K.A."/>
            <person name="Spencer D.H."/>
            <person name="Wong G.K.-S."/>
            <person name="Wu Z."/>
            <person name="Paulsen I.T."/>
            <person name="Reizer J."/>
            <person name="Saier M.H. Jr."/>
            <person name="Hancock R.E.W."/>
            <person name="Lory S."/>
            <person name="Olson M.V."/>
        </authorList>
    </citation>
    <scope>NUCLEOTIDE SEQUENCE [LARGE SCALE GENOMIC DNA]</scope>
    <source>
        <strain>ATCC 15692 / DSM 22644 / CIP 104116 / JCM 14847 / LMG 12228 / 1C / PRS 101 / PAO1</strain>
    </source>
</reference>
<gene>
    <name type="ordered locus">PA5148</name>
</gene>
<dbReference type="EMBL" id="AE004091">
    <property type="protein sequence ID" value="AAG08533.1"/>
    <property type="molecule type" value="Genomic_DNA"/>
</dbReference>
<dbReference type="PIR" id="H83003">
    <property type="entry name" value="H83003"/>
</dbReference>
<dbReference type="RefSeq" id="NP_253835.1">
    <property type="nucleotide sequence ID" value="NC_002516.2"/>
</dbReference>
<dbReference type="RefSeq" id="WP_003096100.1">
    <property type="nucleotide sequence ID" value="NZ_QZGE01000002.1"/>
</dbReference>
<dbReference type="PDB" id="1T07">
    <property type="method" value="X-ray"/>
    <property type="resolution" value="1.80 A"/>
    <property type="chains" value="A=1-90"/>
</dbReference>
<dbReference type="PDBsum" id="1T07"/>
<dbReference type="SMR" id="Q9HU36"/>
<dbReference type="FunCoup" id="Q9HU36">
    <property type="interactions" value="107"/>
</dbReference>
<dbReference type="STRING" id="208964.PA5148"/>
<dbReference type="PaxDb" id="208964-PA5148"/>
<dbReference type="GeneID" id="878754"/>
<dbReference type="KEGG" id="pae:PA5148"/>
<dbReference type="PATRIC" id="fig|208964.12.peg.5396"/>
<dbReference type="PseudoCAP" id="PA5148"/>
<dbReference type="HOGENOM" id="CLU_170994_0_0_6"/>
<dbReference type="InParanoid" id="Q9HU36"/>
<dbReference type="OrthoDB" id="9804318at2"/>
<dbReference type="PhylomeDB" id="Q9HU36"/>
<dbReference type="BioCyc" id="PAER208964:G1FZ6-5263-MONOMER"/>
<dbReference type="EvolutionaryTrace" id="Q9HU36"/>
<dbReference type="Proteomes" id="UP000002438">
    <property type="component" value="Chromosome"/>
</dbReference>
<dbReference type="GO" id="GO:0005829">
    <property type="term" value="C:cytosol"/>
    <property type="evidence" value="ECO:0000318"/>
    <property type="project" value="GO_Central"/>
</dbReference>
<dbReference type="GO" id="GO:0005506">
    <property type="term" value="F:iron ion binding"/>
    <property type="evidence" value="ECO:0007669"/>
    <property type="project" value="UniProtKB-UniRule"/>
</dbReference>
<dbReference type="GO" id="GO:0034599">
    <property type="term" value="P:cellular response to oxidative stress"/>
    <property type="evidence" value="ECO:0000318"/>
    <property type="project" value="GO_Central"/>
</dbReference>
<dbReference type="FunFam" id="1.10.3880.10:FF:000001">
    <property type="entry name" value="Probable Fe(2+)-trafficking protein"/>
    <property type="match status" value="1"/>
</dbReference>
<dbReference type="Gene3D" id="1.10.3880.10">
    <property type="entry name" value="Fe(II) trafficking protein YggX"/>
    <property type="match status" value="1"/>
</dbReference>
<dbReference type="HAMAP" id="MF_00686">
    <property type="entry name" value="Fe_traffic_YggX"/>
    <property type="match status" value="1"/>
</dbReference>
<dbReference type="InterPro" id="IPR007457">
    <property type="entry name" value="Fe_traffick_prot_YggX"/>
</dbReference>
<dbReference type="InterPro" id="IPR036766">
    <property type="entry name" value="Fe_traffick_prot_YggX_sf"/>
</dbReference>
<dbReference type="NCBIfam" id="NF003817">
    <property type="entry name" value="PRK05408.1"/>
    <property type="match status" value="1"/>
</dbReference>
<dbReference type="PANTHER" id="PTHR36965">
    <property type="entry name" value="FE(2+)-TRAFFICKING PROTEIN-RELATED"/>
    <property type="match status" value="1"/>
</dbReference>
<dbReference type="PANTHER" id="PTHR36965:SF1">
    <property type="entry name" value="FE(2+)-TRAFFICKING PROTEIN-RELATED"/>
    <property type="match status" value="1"/>
</dbReference>
<dbReference type="Pfam" id="PF04362">
    <property type="entry name" value="Iron_traffic"/>
    <property type="match status" value="1"/>
</dbReference>
<dbReference type="PIRSF" id="PIRSF029827">
    <property type="entry name" value="Fe_traffic_YggX"/>
    <property type="match status" value="1"/>
</dbReference>
<dbReference type="SUPFAM" id="SSF111148">
    <property type="entry name" value="YggX-like"/>
    <property type="match status" value="1"/>
</dbReference>
<organism>
    <name type="scientific">Pseudomonas aeruginosa (strain ATCC 15692 / DSM 22644 / CIP 104116 / JCM 14847 / LMG 12228 / 1C / PRS 101 / PAO1)</name>
    <dbReference type="NCBI Taxonomy" id="208964"/>
    <lineage>
        <taxon>Bacteria</taxon>
        <taxon>Pseudomonadati</taxon>
        <taxon>Pseudomonadota</taxon>
        <taxon>Gammaproteobacteria</taxon>
        <taxon>Pseudomonadales</taxon>
        <taxon>Pseudomonadaceae</taxon>
        <taxon>Pseudomonas</taxon>
    </lineage>
</organism>
<sequence>MSRTVMCRKYHEELPGLDRPPYPGAKGEDIYNNVSRKAWDEWQKHQTMLINERRLNMMNAEDRKFLQQEMDKFLSGEDYAKADGYVPPSA</sequence>
<protein>
    <recommendedName>
        <fullName evidence="1">Probable Fe(2+)-trafficking protein</fullName>
    </recommendedName>
</protein>
<feature type="chain" id="PRO_0000214498" description="Probable Fe(2+)-trafficking protein">
    <location>
        <begin position="1"/>
        <end position="90"/>
    </location>
</feature>
<feature type="strand" evidence="2">
    <location>
        <begin position="4"/>
        <end position="7"/>
    </location>
</feature>
<feature type="turn" evidence="2">
    <location>
        <begin position="8"/>
        <end position="11"/>
    </location>
</feature>
<feature type="strand" evidence="2">
    <location>
        <begin position="12"/>
        <end position="16"/>
    </location>
</feature>
<feature type="strand" evidence="2">
    <location>
        <begin position="21"/>
        <end position="24"/>
    </location>
</feature>
<feature type="helix" evidence="2">
    <location>
        <begin position="25"/>
        <end position="33"/>
    </location>
</feature>
<feature type="helix" evidence="2">
    <location>
        <begin position="36"/>
        <end position="53"/>
    </location>
</feature>
<feature type="helix" evidence="2">
    <location>
        <begin position="60"/>
        <end position="73"/>
    </location>
</feature>
<feature type="strand" evidence="2">
    <location>
        <begin position="75"/>
        <end position="77"/>
    </location>
</feature>
<evidence type="ECO:0000255" key="1">
    <source>
        <dbReference type="HAMAP-Rule" id="MF_00686"/>
    </source>
</evidence>
<evidence type="ECO:0007829" key="2">
    <source>
        <dbReference type="PDB" id="1T07"/>
    </source>
</evidence>
<proteinExistence type="evidence at protein level"/>
<accession>Q9HU36</accession>